<organism>
    <name type="scientific">Salmonella paratyphi B (strain ATCC BAA-1250 / SPB7)</name>
    <dbReference type="NCBI Taxonomy" id="1016998"/>
    <lineage>
        <taxon>Bacteria</taxon>
        <taxon>Pseudomonadati</taxon>
        <taxon>Pseudomonadota</taxon>
        <taxon>Gammaproteobacteria</taxon>
        <taxon>Enterobacterales</taxon>
        <taxon>Enterobacteriaceae</taxon>
        <taxon>Salmonella</taxon>
    </lineage>
</organism>
<dbReference type="EC" id="4.2.3.5" evidence="1"/>
<dbReference type="EMBL" id="CP000886">
    <property type="protein sequence ID" value="ABX66012.1"/>
    <property type="molecule type" value="Genomic_DNA"/>
</dbReference>
<dbReference type="RefSeq" id="WP_000918456.1">
    <property type="nucleotide sequence ID" value="NC_010102.1"/>
</dbReference>
<dbReference type="SMR" id="A9N460"/>
<dbReference type="KEGG" id="spq:SPAB_00586"/>
<dbReference type="PATRIC" id="fig|1016998.12.peg.547"/>
<dbReference type="HOGENOM" id="CLU_034547_0_2_6"/>
<dbReference type="BioCyc" id="SENT1016998:SPAB_RS02410-MONOMER"/>
<dbReference type="UniPathway" id="UPA00053">
    <property type="reaction ID" value="UER00090"/>
</dbReference>
<dbReference type="Proteomes" id="UP000008556">
    <property type="component" value="Chromosome"/>
</dbReference>
<dbReference type="GO" id="GO:0005829">
    <property type="term" value="C:cytosol"/>
    <property type="evidence" value="ECO:0007669"/>
    <property type="project" value="TreeGrafter"/>
</dbReference>
<dbReference type="GO" id="GO:0004107">
    <property type="term" value="F:chorismate synthase activity"/>
    <property type="evidence" value="ECO:0007669"/>
    <property type="project" value="UniProtKB-UniRule"/>
</dbReference>
<dbReference type="GO" id="GO:0010181">
    <property type="term" value="F:FMN binding"/>
    <property type="evidence" value="ECO:0007669"/>
    <property type="project" value="TreeGrafter"/>
</dbReference>
<dbReference type="GO" id="GO:0008652">
    <property type="term" value="P:amino acid biosynthetic process"/>
    <property type="evidence" value="ECO:0007669"/>
    <property type="project" value="UniProtKB-KW"/>
</dbReference>
<dbReference type="GO" id="GO:0009073">
    <property type="term" value="P:aromatic amino acid family biosynthetic process"/>
    <property type="evidence" value="ECO:0007669"/>
    <property type="project" value="UniProtKB-KW"/>
</dbReference>
<dbReference type="GO" id="GO:0009423">
    <property type="term" value="P:chorismate biosynthetic process"/>
    <property type="evidence" value="ECO:0007669"/>
    <property type="project" value="UniProtKB-UniRule"/>
</dbReference>
<dbReference type="CDD" id="cd07304">
    <property type="entry name" value="Chorismate_synthase"/>
    <property type="match status" value="1"/>
</dbReference>
<dbReference type="FunFam" id="3.60.150.10:FF:000001">
    <property type="entry name" value="Chorismate synthase"/>
    <property type="match status" value="1"/>
</dbReference>
<dbReference type="Gene3D" id="3.60.150.10">
    <property type="entry name" value="Chorismate synthase AroC"/>
    <property type="match status" value="1"/>
</dbReference>
<dbReference type="HAMAP" id="MF_00300">
    <property type="entry name" value="Chorismate_synth"/>
    <property type="match status" value="1"/>
</dbReference>
<dbReference type="InterPro" id="IPR000453">
    <property type="entry name" value="Chorismate_synth"/>
</dbReference>
<dbReference type="InterPro" id="IPR035904">
    <property type="entry name" value="Chorismate_synth_AroC_sf"/>
</dbReference>
<dbReference type="InterPro" id="IPR020541">
    <property type="entry name" value="Chorismate_synthase_CS"/>
</dbReference>
<dbReference type="NCBIfam" id="TIGR00033">
    <property type="entry name" value="aroC"/>
    <property type="match status" value="1"/>
</dbReference>
<dbReference type="NCBIfam" id="NF003793">
    <property type="entry name" value="PRK05382.1"/>
    <property type="match status" value="1"/>
</dbReference>
<dbReference type="PANTHER" id="PTHR21085">
    <property type="entry name" value="CHORISMATE SYNTHASE"/>
    <property type="match status" value="1"/>
</dbReference>
<dbReference type="PANTHER" id="PTHR21085:SF0">
    <property type="entry name" value="CHORISMATE SYNTHASE"/>
    <property type="match status" value="1"/>
</dbReference>
<dbReference type="Pfam" id="PF01264">
    <property type="entry name" value="Chorismate_synt"/>
    <property type="match status" value="1"/>
</dbReference>
<dbReference type="PIRSF" id="PIRSF001456">
    <property type="entry name" value="Chorismate_synth"/>
    <property type="match status" value="1"/>
</dbReference>
<dbReference type="SUPFAM" id="SSF103263">
    <property type="entry name" value="Chorismate synthase, AroC"/>
    <property type="match status" value="1"/>
</dbReference>
<dbReference type="PROSITE" id="PS00787">
    <property type="entry name" value="CHORISMATE_SYNTHASE_1"/>
    <property type="match status" value="1"/>
</dbReference>
<dbReference type="PROSITE" id="PS00788">
    <property type="entry name" value="CHORISMATE_SYNTHASE_2"/>
    <property type="match status" value="1"/>
</dbReference>
<dbReference type="PROSITE" id="PS00789">
    <property type="entry name" value="CHORISMATE_SYNTHASE_3"/>
    <property type="match status" value="1"/>
</dbReference>
<evidence type="ECO:0000255" key="1">
    <source>
        <dbReference type="HAMAP-Rule" id="MF_00300"/>
    </source>
</evidence>
<name>AROC_SALPB</name>
<reference key="1">
    <citation type="submission" date="2007-11" db="EMBL/GenBank/DDBJ databases">
        <authorList>
            <consortium name="The Salmonella enterica serovar Paratyphi B Genome Sequencing Project"/>
            <person name="McClelland M."/>
            <person name="Sanderson E.K."/>
            <person name="Porwollik S."/>
            <person name="Spieth J."/>
            <person name="Clifton W.S."/>
            <person name="Fulton R."/>
            <person name="Cordes M."/>
            <person name="Wollam A."/>
            <person name="Shah N."/>
            <person name="Pepin K."/>
            <person name="Bhonagiri V."/>
            <person name="Nash W."/>
            <person name="Johnson M."/>
            <person name="Thiruvilangam P."/>
            <person name="Wilson R."/>
        </authorList>
    </citation>
    <scope>NUCLEOTIDE SEQUENCE [LARGE SCALE GENOMIC DNA]</scope>
    <source>
        <strain>ATCC BAA-1250 / SPB7</strain>
    </source>
</reference>
<feature type="chain" id="PRO_1000079007" description="Chorismate synthase">
    <location>
        <begin position="1"/>
        <end position="361"/>
    </location>
</feature>
<feature type="binding site" evidence="1">
    <location>
        <position position="48"/>
    </location>
    <ligand>
        <name>NADP(+)</name>
        <dbReference type="ChEBI" id="CHEBI:58349"/>
    </ligand>
</feature>
<feature type="binding site" evidence="1">
    <location>
        <position position="54"/>
    </location>
    <ligand>
        <name>NADP(+)</name>
        <dbReference type="ChEBI" id="CHEBI:58349"/>
    </ligand>
</feature>
<feature type="binding site" evidence="1">
    <location>
        <begin position="125"/>
        <end position="127"/>
    </location>
    <ligand>
        <name>FMN</name>
        <dbReference type="ChEBI" id="CHEBI:58210"/>
    </ligand>
</feature>
<feature type="binding site" evidence="1">
    <location>
        <begin position="238"/>
        <end position="239"/>
    </location>
    <ligand>
        <name>FMN</name>
        <dbReference type="ChEBI" id="CHEBI:58210"/>
    </ligand>
</feature>
<feature type="binding site" evidence="1">
    <location>
        <position position="278"/>
    </location>
    <ligand>
        <name>FMN</name>
        <dbReference type="ChEBI" id="CHEBI:58210"/>
    </ligand>
</feature>
<feature type="binding site" evidence="1">
    <location>
        <begin position="293"/>
        <end position="297"/>
    </location>
    <ligand>
        <name>FMN</name>
        <dbReference type="ChEBI" id="CHEBI:58210"/>
    </ligand>
</feature>
<feature type="binding site" evidence="1">
    <location>
        <position position="319"/>
    </location>
    <ligand>
        <name>FMN</name>
        <dbReference type="ChEBI" id="CHEBI:58210"/>
    </ligand>
</feature>
<proteinExistence type="inferred from homology"/>
<keyword id="KW-0028">Amino-acid biosynthesis</keyword>
<keyword id="KW-0057">Aromatic amino acid biosynthesis</keyword>
<keyword id="KW-0274">FAD</keyword>
<keyword id="KW-0285">Flavoprotein</keyword>
<keyword id="KW-0288">FMN</keyword>
<keyword id="KW-0456">Lyase</keyword>
<keyword id="KW-0521">NADP</keyword>
<accession>A9N460</accession>
<sequence length="361" mass="39109">MAGNTIGQLFRVTTFGESHGLALGCIVDGVPPGIPLTEADLQHDLDRRRPGTSRYTTQRREPDQVKILSGVFDGVTTGTSIGLLIENTDQRSQDYSAIKDVFRPGHADYTYEQKYGLRDYRGGGRSSARETAMRVAAGAIAKKYLAEKFGIEIRGCLTQMGDIPLEIKDWRQVELNPFFCPDADKLDALDELMRALKKEGDSIGAKVTVMASGVPAGLGEPVFDRLDADIAHALMSINAVKGVEIGEGFNVVALRGSQNRDEITAQGFQSNHAGGILGGISSGQHIVAHMALKPTSSITVPGRTINRAGEEVEMITKGRHDPCVGIRAVPIAEAMLAIVLMDHLLRHRAQNADVKTEIPRW</sequence>
<gene>
    <name evidence="1" type="primary">aroC</name>
    <name type="ordered locus">SPAB_00586</name>
</gene>
<protein>
    <recommendedName>
        <fullName evidence="1">Chorismate synthase</fullName>
        <shortName evidence="1">CS</shortName>
        <ecNumber evidence="1">4.2.3.5</ecNumber>
    </recommendedName>
    <alternativeName>
        <fullName evidence="1">5-enolpyruvylshikimate-3-phosphate phospholyase</fullName>
    </alternativeName>
</protein>
<comment type="function">
    <text evidence="1">Catalyzes the anti-1,4-elimination of the C-3 phosphate and the C-6 proR hydrogen from 5-enolpyruvylshikimate-3-phosphate (EPSP) to yield chorismate, which is the branch point compound that serves as the starting substrate for the three terminal pathways of aromatic amino acid biosynthesis. This reaction introduces a second double bond into the aromatic ring system.</text>
</comment>
<comment type="catalytic activity">
    <reaction evidence="1">
        <text>5-O-(1-carboxyvinyl)-3-phosphoshikimate = chorismate + phosphate</text>
        <dbReference type="Rhea" id="RHEA:21020"/>
        <dbReference type="ChEBI" id="CHEBI:29748"/>
        <dbReference type="ChEBI" id="CHEBI:43474"/>
        <dbReference type="ChEBI" id="CHEBI:57701"/>
        <dbReference type="EC" id="4.2.3.5"/>
    </reaction>
</comment>
<comment type="cofactor">
    <cofactor evidence="1">
        <name>FMNH2</name>
        <dbReference type="ChEBI" id="CHEBI:57618"/>
    </cofactor>
    <text evidence="1">Reduced FMN (FMNH(2)).</text>
</comment>
<comment type="pathway">
    <text evidence="1">Metabolic intermediate biosynthesis; chorismate biosynthesis; chorismate from D-erythrose 4-phosphate and phosphoenolpyruvate: step 7/7.</text>
</comment>
<comment type="subunit">
    <text evidence="1">Homotetramer.</text>
</comment>
<comment type="similarity">
    <text evidence="1">Belongs to the chorismate synthase family.</text>
</comment>